<accession>B1MFL8</accession>
<proteinExistence type="inferred from homology"/>
<sequence>MQPGGAPDMSALLAQAQQMQQQLMAAQAQIAAAEVTGESGGGLVRITGKGSGEVTSVQIDPKIVDPEDVETLQDLIIGALADLTSKTQELASQRLGPLAGGLGDLGGGLGLPGV</sequence>
<gene>
    <name type="ordered locus">MAB_0319</name>
</gene>
<comment type="function">
    <text evidence="1">Binds to DNA and alters its conformation. May be involved in regulation of gene expression, nucleoid organization and DNA protection.</text>
</comment>
<comment type="subunit">
    <text evidence="1">Homodimer.</text>
</comment>
<comment type="subcellular location">
    <subcellularLocation>
        <location evidence="1">Cytoplasm</location>
        <location evidence="1">Nucleoid</location>
    </subcellularLocation>
</comment>
<comment type="similarity">
    <text evidence="1">Belongs to the YbaB/EbfC family.</text>
</comment>
<dbReference type="EMBL" id="CU458896">
    <property type="protein sequence ID" value="CAM60418.1"/>
    <property type="molecule type" value="Genomic_DNA"/>
</dbReference>
<dbReference type="RefSeq" id="WP_005083655.1">
    <property type="nucleotide sequence ID" value="NZ_MLCG01000005.1"/>
</dbReference>
<dbReference type="SMR" id="B1MFL8"/>
<dbReference type="GeneID" id="93377262"/>
<dbReference type="KEGG" id="mab:MAB_0319"/>
<dbReference type="Proteomes" id="UP000007137">
    <property type="component" value="Chromosome"/>
</dbReference>
<dbReference type="GO" id="GO:0043590">
    <property type="term" value="C:bacterial nucleoid"/>
    <property type="evidence" value="ECO:0007669"/>
    <property type="project" value="UniProtKB-UniRule"/>
</dbReference>
<dbReference type="GO" id="GO:0005829">
    <property type="term" value="C:cytosol"/>
    <property type="evidence" value="ECO:0007669"/>
    <property type="project" value="TreeGrafter"/>
</dbReference>
<dbReference type="GO" id="GO:0003677">
    <property type="term" value="F:DNA binding"/>
    <property type="evidence" value="ECO:0007669"/>
    <property type="project" value="UniProtKB-UniRule"/>
</dbReference>
<dbReference type="Gene3D" id="3.30.1310.10">
    <property type="entry name" value="Nucleoid-associated protein YbaB-like domain"/>
    <property type="match status" value="1"/>
</dbReference>
<dbReference type="HAMAP" id="MF_00274">
    <property type="entry name" value="DNA_YbaB_EbfC"/>
    <property type="match status" value="1"/>
</dbReference>
<dbReference type="InterPro" id="IPR036894">
    <property type="entry name" value="YbaB-like_sf"/>
</dbReference>
<dbReference type="InterPro" id="IPR004401">
    <property type="entry name" value="YbaB/EbfC"/>
</dbReference>
<dbReference type="NCBIfam" id="TIGR00103">
    <property type="entry name" value="DNA_YbaB_EbfC"/>
    <property type="match status" value="1"/>
</dbReference>
<dbReference type="PANTHER" id="PTHR33449">
    <property type="entry name" value="NUCLEOID-ASSOCIATED PROTEIN YBAB"/>
    <property type="match status" value="1"/>
</dbReference>
<dbReference type="PANTHER" id="PTHR33449:SF1">
    <property type="entry name" value="NUCLEOID-ASSOCIATED PROTEIN YBAB"/>
    <property type="match status" value="1"/>
</dbReference>
<dbReference type="Pfam" id="PF02575">
    <property type="entry name" value="YbaB_DNA_bd"/>
    <property type="match status" value="1"/>
</dbReference>
<dbReference type="PIRSF" id="PIRSF004555">
    <property type="entry name" value="UCP004555"/>
    <property type="match status" value="1"/>
</dbReference>
<dbReference type="SUPFAM" id="SSF82607">
    <property type="entry name" value="YbaB-like"/>
    <property type="match status" value="1"/>
</dbReference>
<feature type="chain" id="PRO_1000114624" description="Nucleoid-associated protein MAB_0319">
    <location>
        <begin position="1"/>
        <end position="114"/>
    </location>
</feature>
<reference key="1">
    <citation type="journal article" date="2009" name="PLoS ONE">
        <title>Non mycobacterial virulence genes in the genome of the emerging pathogen Mycobacterium abscessus.</title>
        <authorList>
            <person name="Ripoll F."/>
            <person name="Pasek S."/>
            <person name="Schenowitz C."/>
            <person name="Dossat C."/>
            <person name="Barbe V."/>
            <person name="Rottman M."/>
            <person name="Macheras E."/>
            <person name="Heym B."/>
            <person name="Herrmann J.L."/>
            <person name="Daffe M."/>
            <person name="Brosch R."/>
            <person name="Risler J.L."/>
            <person name="Gaillard J.L."/>
        </authorList>
    </citation>
    <scope>NUCLEOTIDE SEQUENCE [LARGE SCALE GENOMIC DNA]</scope>
    <source>
        <strain>ATCC 19977 / DSM 44196 / CCUG 20993 / CIP 104536 / JCM 13569 / NCTC 13031 / TMC 1543 / L948</strain>
    </source>
</reference>
<keyword id="KW-0963">Cytoplasm</keyword>
<keyword id="KW-0238">DNA-binding</keyword>
<keyword id="KW-1185">Reference proteome</keyword>
<organism>
    <name type="scientific">Mycobacteroides abscessus (strain ATCC 19977 / DSM 44196 / CCUG 20993 / CIP 104536 / JCM 13569 / NCTC 13031 / TMC 1543 / L948)</name>
    <name type="common">Mycobacterium abscessus</name>
    <dbReference type="NCBI Taxonomy" id="561007"/>
    <lineage>
        <taxon>Bacteria</taxon>
        <taxon>Bacillati</taxon>
        <taxon>Actinomycetota</taxon>
        <taxon>Actinomycetes</taxon>
        <taxon>Mycobacteriales</taxon>
        <taxon>Mycobacteriaceae</taxon>
        <taxon>Mycobacteroides</taxon>
        <taxon>Mycobacteroides abscessus</taxon>
    </lineage>
</organism>
<name>Y319_MYCA9</name>
<evidence type="ECO:0000255" key="1">
    <source>
        <dbReference type="HAMAP-Rule" id="MF_00274"/>
    </source>
</evidence>
<protein>
    <recommendedName>
        <fullName evidence="1">Nucleoid-associated protein MAB_0319</fullName>
    </recommendedName>
</protein>